<sequence length="535" mass="60381">MVNIILLIVSALIGLILGYALISIRLKSAKEAAELTLLNAEQEAVDIRGKAEVDAEHIKKTAKRESKANRKELLLEAKEEARKYREEIEQEFKSERQELKQLETRLAERSLTLDRKDENLSSKEKVLDSKEQSLTDKSKHIDERQLQVEKLEEEKKAELEKVAAMTIAEAREVILMETENKLTHEIATRIRDAERDIKDRTVKTAKDLLAQAMQRLAGEYVTEQTITSVHLPDDNMKGRIIGREGRNIRTLESLTGIDVIIDDTPEVVILSGFDPIRREIARMTLESLIADGRIHPARIEELVEKNRLEMDNRIREYGEAAAYEIGAPNLHPDLIKIMGRLQFRTSFGQNVLRHSVEVGKLAGILAGELGENVALARRAGFLHDMGKAIDREVEGSHVEIGMEFARKYKEHPVVVNTIASHHGDVEPDSVIAVLVAAADALSSARPGARNESMENYIKRLRDLEEIATSFDGVQNSFALQAGREIRIMVQPEKISDDQVVILSHKVREKIENNLDYPGNIKVTVIREMRAVDYAK</sequence>
<feature type="chain" id="PRO_0000344948" description="Ribonuclease Y">
    <location>
        <begin position="1"/>
        <end position="535"/>
    </location>
</feature>
<feature type="transmembrane region" description="Helical" evidence="1">
    <location>
        <begin position="4"/>
        <end position="24"/>
    </location>
</feature>
<feature type="domain" description="KH" evidence="1">
    <location>
        <begin position="225"/>
        <end position="285"/>
    </location>
</feature>
<feature type="domain" description="HD" evidence="2">
    <location>
        <begin position="351"/>
        <end position="444"/>
    </location>
</feature>
<feature type="region of interest" description="Disordered" evidence="3">
    <location>
        <begin position="118"/>
        <end position="141"/>
    </location>
</feature>
<dbReference type="EC" id="3.1.-.-" evidence="1"/>
<dbReference type="EMBL" id="AM295007">
    <property type="protein sequence ID" value="CAM29791.1"/>
    <property type="molecule type" value="Genomic_DNA"/>
</dbReference>
<dbReference type="RefSeq" id="WP_002988954.1">
    <property type="nucleotide sequence ID" value="NC_009332.1"/>
</dbReference>
<dbReference type="SMR" id="A2RD66"/>
<dbReference type="KEGG" id="spf:SpyM50449"/>
<dbReference type="HOGENOM" id="CLU_028328_1_0_9"/>
<dbReference type="GO" id="GO:0005886">
    <property type="term" value="C:plasma membrane"/>
    <property type="evidence" value="ECO:0007669"/>
    <property type="project" value="UniProtKB-SubCell"/>
</dbReference>
<dbReference type="GO" id="GO:0003723">
    <property type="term" value="F:RNA binding"/>
    <property type="evidence" value="ECO:0007669"/>
    <property type="project" value="UniProtKB-UniRule"/>
</dbReference>
<dbReference type="GO" id="GO:0004521">
    <property type="term" value="F:RNA endonuclease activity"/>
    <property type="evidence" value="ECO:0007669"/>
    <property type="project" value="UniProtKB-UniRule"/>
</dbReference>
<dbReference type="GO" id="GO:0006402">
    <property type="term" value="P:mRNA catabolic process"/>
    <property type="evidence" value="ECO:0007669"/>
    <property type="project" value="UniProtKB-UniRule"/>
</dbReference>
<dbReference type="CDD" id="cd00077">
    <property type="entry name" value="HDc"/>
    <property type="match status" value="1"/>
</dbReference>
<dbReference type="CDD" id="cd22431">
    <property type="entry name" value="KH-I_RNaseY"/>
    <property type="match status" value="1"/>
</dbReference>
<dbReference type="FunFam" id="1.10.3210.10:FF:000003">
    <property type="entry name" value="Ribonuclease Y"/>
    <property type="match status" value="1"/>
</dbReference>
<dbReference type="Gene3D" id="1.10.3210.10">
    <property type="entry name" value="Hypothetical protein af1432"/>
    <property type="match status" value="1"/>
</dbReference>
<dbReference type="Gene3D" id="3.30.1370.10">
    <property type="entry name" value="K Homology domain, type 1"/>
    <property type="match status" value="1"/>
</dbReference>
<dbReference type="HAMAP" id="MF_00335">
    <property type="entry name" value="RNase_Y"/>
    <property type="match status" value="1"/>
</dbReference>
<dbReference type="InterPro" id="IPR003607">
    <property type="entry name" value="HD/PDEase_dom"/>
</dbReference>
<dbReference type="InterPro" id="IPR006674">
    <property type="entry name" value="HD_domain"/>
</dbReference>
<dbReference type="InterPro" id="IPR006675">
    <property type="entry name" value="HDIG_dom"/>
</dbReference>
<dbReference type="InterPro" id="IPR004087">
    <property type="entry name" value="KH_dom"/>
</dbReference>
<dbReference type="InterPro" id="IPR004088">
    <property type="entry name" value="KH_dom_type_1"/>
</dbReference>
<dbReference type="InterPro" id="IPR036612">
    <property type="entry name" value="KH_dom_type_1_sf"/>
</dbReference>
<dbReference type="InterPro" id="IPR017705">
    <property type="entry name" value="Ribonuclease_Y"/>
</dbReference>
<dbReference type="InterPro" id="IPR022711">
    <property type="entry name" value="RNase_Y_N"/>
</dbReference>
<dbReference type="NCBIfam" id="TIGR00277">
    <property type="entry name" value="HDIG"/>
    <property type="match status" value="1"/>
</dbReference>
<dbReference type="NCBIfam" id="NF000997">
    <property type="entry name" value="PRK00106.1"/>
    <property type="match status" value="1"/>
</dbReference>
<dbReference type="NCBIfam" id="TIGR03319">
    <property type="entry name" value="RNase_Y"/>
    <property type="match status" value="1"/>
</dbReference>
<dbReference type="PANTHER" id="PTHR12826">
    <property type="entry name" value="RIBONUCLEASE Y"/>
    <property type="match status" value="1"/>
</dbReference>
<dbReference type="PANTHER" id="PTHR12826:SF15">
    <property type="entry name" value="RIBONUCLEASE Y"/>
    <property type="match status" value="1"/>
</dbReference>
<dbReference type="Pfam" id="PF01966">
    <property type="entry name" value="HD"/>
    <property type="match status" value="1"/>
</dbReference>
<dbReference type="Pfam" id="PF00013">
    <property type="entry name" value="KH_1"/>
    <property type="match status" value="1"/>
</dbReference>
<dbReference type="Pfam" id="PF12072">
    <property type="entry name" value="RNase_Y_N"/>
    <property type="match status" value="1"/>
</dbReference>
<dbReference type="SMART" id="SM00471">
    <property type="entry name" value="HDc"/>
    <property type="match status" value="1"/>
</dbReference>
<dbReference type="SMART" id="SM00322">
    <property type="entry name" value="KH"/>
    <property type="match status" value="1"/>
</dbReference>
<dbReference type="SUPFAM" id="SSF54791">
    <property type="entry name" value="Eukaryotic type KH-domain (KH-domain type I)"/>
    <property type="match status" value="1"/>
</dbReference>
<dbReference type="SUPFAM" id="SSF109604">
    <property type="entry name" value="HD-domain/PDEase-like"/>
    <property type="match status" value="1"/>
</dbReference>
<dbReference type="PROSITE" id="PS51831">
    <property type="entry name" value="HD"/>
    <property type="match status" value="1"/>
</dbReference>
<dbReference type="PROSITE" id="PS50084">
    <property type="entry name" value="KH_TYPE_1"/>
    <property type="match status" value="1"/>
</dbReference>
<organism>
    <name type="scientific">Streptococcus pyogenes serotype M5 (strain Manfredo)</name>
    <dbReference type="NCBI Taxonomy" id="160491"/>
    <lineage>
        <taxon>Bacteria</taxon>
        <taxon>Bacillati</taxon>
        <taxon>Bacillota</taxon>
        <taxon>Bacilli</taxon>
        <taxon>Lactobacillales</taxon>
        <taxon>Streptococcaceae</taxon>
        <taxon>Streptococcus</taxon>
    </lineage>
</organism>
<accession>A2RD66</accession>
<protein>
    <recommendedName>
        <fullName evidence="1">Ribonuclease Y</fullName>
        <shortName evidence="1">RNase Y</shortName>
        <ecNumber evidence="1">3.1.-.-</ecNumber>
    </recommendedName>
</protein>
<name>RNY_STRPG</name>
<gene>
    <name evidence="1" type="primary">rny</name>
    <name type="ordered locus">SpyM50449</name>
</gene>
<proteinExistence type="inferred from homology"/>
<evidence type="ECO:0000255" key="1">
    <source>
        <dbReference type="HAMAP-Rule" id="MF_00335"/>
    </source>
</evidence>
<evidence type="ECO:0000255" key="2">
    <source>
        <dbReference type="PROSITE-ProRule" id="PRU01175"/>
    </source>
</evidence>
<evidence type="ECO:0000256" key="3">
    <source>
        <dbReference type="SAM" id="MobiDB-lite"/>
    </source>
</evidence>
<keyword id="KW-1003">Cell membrane</keyword>
<keyword id="KW-0255">Endonuclease</keyword>
<keyword id="KW-0378">Hydrolase</keyword>
<keyword id="KW-0472">Membrane</keyword>
<keyword id="KW-0540">Nuclease</keyword>
<keyword id="KW-0694">RNA-binding</keyword>
<keyword id="KW-0812">Transmembrane</keyword>
<keyword id="KW-1133">Transmembrane helix</keyword>
<comment type="function">
    <text evidence="1">Endoribonuclease that initiates mRNA decay.</text>
</comment>
<comment type="subcellular location">
    <subcellularLocation>
        <location evidence="1">Cell membrane</location>
        <topology evidence="1">Single-pass membrane protein</topology>
    </subcellularLocation>
</comment>
<comment type="similarity">
    <text evidence="1">Belongs to the RNase Y family.</text>
</comment>
<reference key="1">
    <citation type="journal article" date="2007" name="J. Bacteriol.">
        <title>Complete genome of acute rheumatic fever-associated serotype M5 Streptococcus pyogenes strain Manfredo.</title>
        <authorList>
            <person name="Holden M.T.G."/>
            <person name="Scott A."/>
            <person name="Cherevach I."/>
            <person name="Chillingworth T."/>
            <person name="Churcher C."/>
            <person name="Cronin A."/>
            <person name="Dowd L."/>
            <person name="Feltwell T."/>
            <person name="Hamlin N."/>
            <person name="Holroyd S."/>
            <person name="Jagels K."/>
            <person name="Moule S."/>
            <person name="Mungall K."/>
            <person name="Quail M.A."/>
            <person name="Price C."/>
            <person name="Rabbinowitsch E."/>
            <person name="Sharp S."/>
            <person name="Skelton J."/>
            <person name="Whitehead S."/>
            <person name="Barrell B.G."/>
            <person name="Kehoe M."/>
            <person name="Parkhill J."/>
        </authorList>
    </citation>
    <scope>NUCLEOTIDE SEQUENCE [LARGE SCALE GENOMIC DNA]</scope>
    <source>
        <strain>Manfredo</strain>
    </source>
</reference>